<name>PSBJ_NEPOL</name>
<evidence type="ECO:0000255" key="1">
    <source>
        <dbReference type="HAMAP-Rule" id="MF_01305"/>
    </source>
</evidence>
<accession>Q9TKY4</accession>
<protein>
    <recommendedName>
        <fullName evidence="1">Photosystem II reaction center protein J</fullName>
        <shortName evidence="1">PSII-J</shortName>
    </recommendedName>
</protein>
<proteinExistence type="inferred from homology"/>
<geneLocation type="chloroplast"/>
<sequence length="42" mass="4326">MSNTGTTGRVPLWFVGMIVGLAALGLLGIFFYGSYTGLGSSL</sequence>
<feature type="chain" id="PRO_0000216602" description="Photosystem II reaction center protein J">
    <location>
        <begin position="1"/>
        <end position="42"/>
    </location>
</feature>
<feature type="transmembrane region" description="Helical" evidence="1">
    <location>
        <begin position="12"/>
        <end position="32"/>
    </location>
</feature>
<gene>
    <name evidence="1" type="primary">psbJ</name>
</gene>
<organism>
    <name type="scientific">Nephroselmis olivacea</name>
    <name type="common">Green alga</name>
    <dbReference type="NCBI Taxonomy" id="31312"/>
    <lineage>
        <taxon>Eukaryota</taxon>
        <taxon>Viridiplantae</taxon>
        <taxon>Chlorophyta</taxon>
        <taxon>Nephroselmidophyceae</taxon>
        <taxon>Nephroselmidales</taxon>
        <taxon>Nephroselmidaceae</taxon>
        <taxon>Nephroselmis</taxon>
    </lineage>
</organism>
<comment type="function">
    <text evidence="1">One of the components of the core complex of photosystem II (PSII). PSII is a light-driven water:plastoquinone oxidoreductase that uses light energy to abstract electrons from H(2)O, generating O(2) and a proton gradient subsequently used for ATP formation. It consists of a core antenna complex that captures photons, and an electron transfer chain that converts photonic excitation into a charge separation.</text>
</comment>
<comment type="subunit">
    <text evidence="1">PSII is composed of 1 copy each of membrane proteins PsbA, PsbB, PsbC, PsbD, PsbE, PsbF, PsbH, PsbI, PsbJ, PsbK, PsbL, PsbM, PsbT, PsbX, PsbY, PsbZ, Psb30/Ycf12, at least 3 peripheral proteins of the oxygen-evolving complex and a large number of cofactors. It forms dimeric complexes.</text>
</comment>
<comment type="subcellular location">
    <subcellularLocation>
        <location evidence="1">Plastid</location>
        <location evidence="1">Chloroplast thylakoid membrane</location>
        <topology evidence="1">Single-pass membrane protein</topology>
    </subcellularLocation>
</comment>
<comment type="similarity">
    <text evidence="1">Belongs to the PsbJ family.</text>
</comment>
<keyword id="KW-0150">Chloroplast</keyword>
<keyword id="KW-0472">Membrane</keyword>
<keyword id="KW-0602">Photosynthesis</keyword>
<keyword id="KW-0604">Photosystem II</keyword>
<keyword id="KW-0934">Plastid</keyword>
<keyword id="KW-0674">Reaction center</keyword>
<keyword id="KW-0793">Thylakoid</keyword>
<keyword id="KW-0812">Transmembrane</keyword>
<keyword id="KW-1133">Transmembrane helix</keyword>
<dbReference type="EMBL" id="AF137379">
    <property type="protein sequence ID" value="AAD54832.1"/>
    <property type="molecule type" value="Genomic_DNA"/>
</dbReference>
<dbReference type="RefSeq" id="NP_050861.1">
    <property type="nucleotide sequence ID" value="NC_000927.1"/>
</dbReference>
<dbReference type="SMR" id="Q9TKY4"/>
<dbReference type="GeneID" id="802012"/>
<dbReference type="GO" id="GO:0009535">
    <property type="term" value="C:chloroplast thylakoid membrane"/>
    <property type="evidence" value="ECO:0007669"/>
    <property type="project" value="UniProtKB-SubCell"/>
</dbReference>
<dbReference type="GO" id="GO:0009539">
    <property type="term" value="C:photosystem II reaction center"/>
    <property type="evidence" value="ECO:0007669"/>
    <property type="project" value="InterPro"/>
</dbReference>
<dbReference type="GO" id="GO:0015979">
    <property type="term" value="P:photosynthesis"/>
    <property type="evidence" value="ECO:0007669"/>
    <property type="project" value="UniProtKB-UniRule"/>
</dbReference>
<dbReference type="Gene3D" id="6.10.250.2070">
    <property type="match status" value="1"/>
</dbReference>
<dbReference type="HAMAP" id="MF_01305">
    <property type="entry name" value="PSII_PsbJ"/>
    <property type="match status" value="1"/>
</dbReference>
<dbReference type="InterPro" id="IPR002682">
    <property type="entry name" value="PSII_PsbJ"/>
</dbReference>
<dbReference type="InterPro" id="IPR037267">
    <property type="entry name" value="PSII_PsbJ_sf"/>
</dbReference>
<dbReference type="NCBIfam" id="NF002722">
    <property type="entry name" value="PRK02565.1"/>
    <property type="match status" value="1"/>
</dbReference>
<dbReference type="PANTHER" id="PTHR34812">
    <property type="entry name" value="PHOTOSYSTEM II REACTION CENTER PROTEIN J"/>
    <property type="match status" value="1"/>
</dbReference>
<dbReference type="PANTHER" id="PTHR34812:SF3">
    <property type="entry name" value="PHOTOSYSTEM II REACTION CENTER PROTEIN J"/>
    <property type="match status" value="1"/>
</dbReference>
<dbReference type="Pfam" id="PF01788">
    <property type="entry name" value="PsbJ"/>
    <property type="match status" value="1"/>
</dbReference>
<dbReference type="SUPFAM" id="SSF161021">
    <property type="entry name" value="Photosystem II reaction center protein J, PsbJ"/>
    <property type="match status" value="1"/>
</dbReference>
<reference key="1">
    <citation type="journal article" date="1999" name="Proc. Natl. Acad. Sci. U.S.A.">
        <title>The complete chloroplast DNA sequence of the green alga Nephroselmis olivacea: insights into the architecture of ancestral chloroplast genomes.</title>
        <authorList>
            <person name="Turmel M."/>
            <person name="Otis C."/>
            <person name="Lemieux C."/>
        </authorList>
    </citation>
    <scope>NUCLEOTIDE SEQUENCE [LARGE SCALE GENOMIC DNA]</scope>
    <source>
        <strain>NIES-484 / S-N-5-8</strain>
    </source>
</reference>